<dbReference type="EC" id="3.6.1.67" evidence="4"/>
<dbReference type="EMBL" id="X59551">
    <property type="protein sequence ID" value="CAA42124.1"/>
    <property type="molecule type" value="Genomic_DNA"/>
</dbReference>
<dbReference type="EMBL" id="D10165">
    <property type="protein sequence ID" value="BAA01029.1"/>
    <property type="molecule type" value="Genomic_DNA"/>
</dbReference>
<dbReference type="EMBL" id="U00096">
    <property type="protein sequence ID" value="AAC74935.1"/>
    <property type="molecule type" value="Genomic_DNA"/>
</dbReference>
<dbReference type="EMBL" id="AP009048">
    <property type="protein sequence ID" value="BAA15676.1"/>
    <property type="molecule type" value="Genomic_DNA"/>
</dbReference>
<dbReference type="PIR" id="B38113">
    <property type="entry name" value="B38113"/>
</dbReference>
<dbReference type="RefSeq" id="NP_416379.1">
    <property type="nucleotide sequence ID" value="NC_000913.3"/>
</dbReference>
<dbReference type="RefSeq" id="WP_001300367.1">
    <property type="nucleotide sequence ID" value="NZ_SSZK01000001.1"/>
</dbReference>
<dbReference type="PDB" id="2O1C">
    <property type="method" value="X-ray"/>
    <property type="resolution" value="1.80 A"/>
    <property type="chains" value="A/B/C/D=1-150"/>
</dbReference>
<dbReference type="PDB" id="2O5W">
    <property type="method" value="X-ray"/>
    <property type="resolution" value="2.60 A"/>
    <property type="chains" value="A/B/C/D=1-150"/>
</dbReference>
<dbReference type="PDB" id="5U7E">
    <property type="method" value="X-ray"/>
    <property type="resolution" value="1.94 A"/>
    <property type="chains" value="A=1-150"/>
</dbReference>
<dbReference type="PDB" id="5U7F">
    <property type="method" value="X-ray"/>
    <property type="resolution" value="1.79 A"/>
    <property type="chains" value="A=1-150"/>
</dbReference>
<dbReference type="PDB" id="5U7H">
    <property type="method" value="X-ray"/>
    <property type="resolution" value="2.00 A"/>
    <property type="chains" value="A=1-150"/>
</dbReference>
<dbReference type="PDBsum" id="2O1C"/>
<dbReference type="PDBsum" id="2O5W"/>
<dbReference type="PDBsum" id="5U7E"/>
<dbReference type="PDBsum" id="5U7F"/>
<dbReference type="PDBsum" id="5U7H"/>
<dbReference type="SMR" id="P0AFC0"/>
<dbReference type="BioGRID" id="4260348">
    <property type="interactions" value="320"/>
</dbReference>
<dbReference type="DIP" id="DIP-10372N"/>
<dbReference type="FunCoup" id="P0AFC0">
    <property type="interactions" value="164"/>
</dbReference>
<dbReference type="IntAct" id="P0AFC0">
    <property type="interactions" value="7"/>
</dbReference>
<dbReference type="STRING" id="511145.b1865"/>
<dbReference type="PaxDb" id="511145-b1865"/>
<dbReference type="EnsemblBacteria" id="AAC74935">
    <property type="protein sequence ID" value="AAC74935"/>
    <property type="gene ID" value="b1865"/>
</dbReference>
<dbReference type="GeneID" id="75202729"/>
<dbReference type="GeneID" id="946383"/>
<dbReference type="KEGG" id="ecj:JW1854"/>
<dbReference type="KEGG" id="eco:b1865"/>
<dbReference type="PATRIC" id="fig|511145.12.peg.1944"/>
<dbReference type="EchoBASE" id="EB1128"/>
<dbReference type="eggNOG" id="COG0494">
    <property type="taxonomic scope" value="Bacteria"/>
</dbReference>
<dbReference type="HOGENOM" id="CLU_128620_0_0_6"/>
<dbReference type="InParanoid" id="P0AFC0"/>
<dbReference type="OMA" id="TRNTEHW"/>
<dbReference type="OrthoDB" id="7066556at2"/>
<dbReference type="PhylomeDB" id="P0AFC0"/>
<dbReference type="BioCyc" id="EcoCyc:H2NEOPTERINP3PYROPHOSPHOHYDRO-MONOMER"/>
<dbReference type="BioCyc" id="MetaCyc:H2NEOPTERINP3PYROPHOSPHOHYDRO-MONOMER"/>
<dbReference type="BRENDA" id="3.6.1.67">
    <property type="organism ID" value="2026"/>
</dbReference>
<dbReference type="EvolutionaryTrace" id="P0AFC0"/>
<dbReference type="PRO" id="PR:P0AFC0"/>
<dbReference type="Proteomes" id="UP000000625">
    <property type="component" value="Chromosome"/>
</dbReference>
<dbReference type="GO" id="GO:0008828">
    <property type="term" value="F:dATP diphosphatase activity"/>
    <property type="evidence" value="ECO:0000314"/>
    <property type="project" value="EcoCyc"/>
</dbReference>
<dbReference type="GO" id="GO:0019177">
    <property type="term" value="F:dihydroneopterin triphosphate pyrophosphohydrolase activity"/>
    <property type="evidence" value="ECO:0000314"/>
    <property type="project" value="EcoCyc"/>
</dbReference>
<dbReference type="GO" id="GO:0000287">
    <property type="term" value="F:magnesium ion binding"/>
    <property type="evidence" value="ECO:0000314"/>
    <property type="project" value="EcoCyc"/>
</dbReference>
<dbReference type="GO" id="GO:0046872">
    <property type="term" value="F:metal ion binding"/>
    <property type="evidence" value="ECO:0000314"/>
    <property type="project" value="EcoCyc"/>
</dbReference>
<dbReference type="GO" id="GO:0046656">
    <property type="term" value="P:folic acid biosynthetic process"/>
    <property type="evidence" value="ECO:0000315"/>
    <property type="project" value="EcoCyc"/>
</dbReference>
<dbReference type="GO" id="GO:0046654">
    <property type="term" value="P:tetrahydrofolate biosynthetic process"/>
    <property type="evidence" value="ECO:0000315"/>
    <property type="project" value="EcoCyc"/>
</dbReference>
<dbReference type="CDD" id="cd04664">
    <property type="entry name" value="NUDIX_DHNTPase_like"/>
    <property type="match status" value="1"/>
</dbReference>
<dbReference type="FunFam" id="3.90.79.10:FF:000041">
    <property type="entry name" value="Dihydroneopterin triphosphate pyrophosphatase"/>
    <property type="match status" value="1"/>
</dbReference>
<dbReference type="Gene3D" id="3.90.79.10">
    <property type="entry name" value="Nucleoside Triphosphate Pyrophosphohydrolase"/>
    <property type="match status" value="1"/>
</dbReference>
<dbReference type="InterPro" id="IPR003564">
    <property type="entry name" value="DHNTPase"/>
</dbReference>
<dbReference type="InterPro" id="IPR015797">
    <property type="entry name" value="NUDIX_hydrolase-like_dom_sf"/>
</dbReference>
<dbReference type="InterPro" id="IPR020084">
    <property type="entry name" value="NUDIX_hydrolase_CS"/>
</dbReference>
<dbReference type="InterPro" id="IPR000086">
    <property type="entry name" value="NUDIX_hydrolase_dom"/>
</dbReference>
<dbReference type="InterPro" id="IPR051325">
    <property type="entry name" value="Nudix_hydrolase_domain"/>
</dbReference>
<dbReference type="NCBIfam" id="NF006961">
    <property type="entry name" value="PRK09438.1"/>
    <property type="match status" value="1"/>
</dbReference>
<dbReference type="PANTHER" id="PTHR21340:SF0">
    <property type="entry name" value="BIS(5'-NUCLEOSYL)-TETRAPHOSPHATASE [ASYMMETRICAL]"/>
    <property type="match status" value="1"/>
</dbReference>
<dbReference type="PANTHER" id="PTHR21340">
    <property type="entry name" value="DIADENOSINE 5,5-P1,P4-TETRAPHOSPHATE PYROPHOSPHOHYDROLASE MUTT"/>
    <property type="match status" value="1"/>
</dbReference>
<dbReference type="Pfam" id="PF00293">
    <property type="entry name" value="NUDIX"/>
    <property type="match status" value="1"/>
</dbReference>
<dbReference type="PRINTS" id="PR01404">
    <property type="entry name" value="NPPPHYDRLASE"/>
</dbReference>
<dbReference type="SUPFAM" id="SSF55811">
    <property type="entry name" value="Nudix"/>
    <property type="match status" value="1"/>
</dbReference>
<dbReference type="PROSITE" id="PS51462">
    <property type="entry name" value="NUDIX"/>
    <property type="match status" value="1"/>
</dbReference>
<dbReference type="PROSITE" id="PS00893">
    <property type="entry name" value="NUDIX_BOX"/>
    <property type="match status" value="1"/>
</dbReference>
<protein>
    <recommendedName>
        <fullName>Dihydroneopterin triphosphate diphosphatase</fullName>
        <ecNumber evidence="4">3.6.1.67</ecNumber>
    </recommendedName>
    <alternativeName>
        <fullName>Dihydroneopterin triphosphate pyrophosphatase</fullName>
    </alternativeName>
    <alternativeName>
        <fullName>dATP pyrophosphohydrolase</fullName>
    </alternativeName>
</protein>
<gene>
    <name type="primary">nudB</name>
    <name type="synonym">ntpA</name>
    <name type="ordered locus">b1865</name>
    <name type="ordered locus">JW1854</name>
</gene>
<accession>P0AFC0</accession>
<accession>P24236</accession>
<evidence type="ECO:0000255" key="1"/>
<evidence type="ECO:0000255" key="2">
    <source>
        <dbReference type="PROSITE-ProRule" id="PRU00794"/>
    </source>
</evidence>
<evidence type="ECO:0000269" key="3">
    <source>
    </source>
</evidence>
<evidence type="ECO:0000269" key="4">
    <source>
    </source>
</evidence>
<evidence type="ECO:0000305" key="5"/>
<evidence type="ECO:0007829" key="6">
    <source>
        <dbReference type="PDB" id="5U7F"/>
    </source>
</evidence>
<proteinExistence type="evidence at protein level"/>
<comment type="function">
    <text evidence="3 4">Catalyzes the hydrolysis of dihydroneopterin triphosphate to dihydroneopterin monophosphate and pyrophosphate. Required for efficient folate biosynthesis. Can also hydrolyze nucleoside triphosphates with a preference for dATP.</text>
</comment>
<comment type="catalytic activity">
    <reaction evidence="4">
        <text>7,8-dihydroneopterin 3'-triphosphate + H2O = 7,8-dihydroneopterin 3'-phosphate + diphosphate + H(+)</text>
        <dbReference type="Rhea" id="RHEA:25302"/>
        <dbReference type="ChEBI" id="CHEBI:15377"/>
        <dbReference type="ChEBI" id="CHEBI:15378"/>
        <dbReference type="ChEBI" id="CHEBI:33019"/>
        <dbReference type="ChEBI" id="CHEBI:58462"/>
        <dbReference type="ChEBI" id="CHEBI:58762"/>
        <dbReference type="EC" id="3.6.1.67"/>
    </reaction>
</comment>
<comment type="cofactor">
    <cofactor evidence="4">
        <name>Mg(2+)</name>
        <dbReference type="ChEBI" id="CHEBI:18420"/>
    </cofactor>
    <text evidence="4">Binds 1 Mg(2+) ion per subunit.</text>
</comment>
<comment type="activity regulation">
    <text evidence="4">Subject to product inhibition by pyrophosphate.</text>
</comment>
<comment type="biophysicochemical properties">
    <kinetics>
        <KM evidence="3 4">0.27 mM for dihydroneopterin triphosphate</KM>
        <KM evidence="3 4">0.79 mM for dATP</KM>
    </kinetics>
    <phDependence>
        <text evidence="3 4">Optimum pH is 8.5-9.</text>
    </phDependence>
</comment>
<comment type="similarity">
    <text evidence="5">Belongs to the Nudix hydrolase family.</text>
</comment>
<organism>
    <name type="scientific">Escherichia coli (strain K12)</name>
    <dbReference type="NCBI Taxonomy" id="83333"/>
    <lineage>
        <taxon>Bacteria</taxon>
        <taxon>Pseudomonadati</taxon>
        <taxon>Pseudomonadota</taxon>
        <taxon>Gammaproteobacteria</taxon>
        <taxon>Enterobacterales</taxon>
        <taxon>Enterobacteriaceae</taxon>
        <taxon>Escherichia</taxon>
    </lineage>
</organism>
<keyword id="KW-0002">3D-structure</keyword>
<keyword id="KW-0289">Folate biosynthesis</keyword>
<keyword id="KW-0378">Hydrolase</keyword>
<keyword id="KW-0460">Magnesium</keyword>
<keyword id="KW-0479">Metal-binding</keyword>
<keyword id="KW-1185">Reference proteome</keyword>
<feature type="chain" id="PRO_0000056952" description="Dihydroneopterin triphosphate diphosphatase">
    <location>
        <begin position="1"/>
        <end position="150"/>
    </location>
</feature>
<feature type="domain" description="Nudix hydrolase" evidence="2">
    <location>
        <begin position="5"/>
        <end position="146"/>
    </location>
</feature>
<feature type="short sequence motif" description="Nudix box">
    <location>
        <begin position="41"/>
        <end position="62"/>
    </location>
</feature>
<feature type="binding site">
    <location>
        <position position="7"/>
    </location>
    <ligand>
        <name>substrate</name>
    </ligand>
</feature>
<feature type="binding site">
    <location>
        <position position="29"/>
    </location>
    <ligand>
        <name>substrate</name>
    </ligand>
</feature>
<feature type="binding site">
    <location>
        <position position="40"/>
    </location>
    <ligand>
        <name>substrate</name>
    </ligand>
</feature>
<feature type="binding site">
    <location>
        <position position="56"/>
    </location>
    <ligand>
        <name>Mg(2+)</name>
        <dbReference type="ChEBI" id="CHEBI:18420"/>
    </ligand>
</feature>
<feature type="binding site">
    <location>
        <position position="60"/>
    </location>
    <ligand>
        <name>Mg(2+)</name>
        <dbReference type="ChEBI" id="CHEBI:18420"/>
    </ligand>
</feature>
<feature type="binding site" evidence="1">
    <location>
        <begin position="81"/>
        <end position="84"/>
    </location>
    <ligand>
        <name>substrate</name>
    </ligand>
</feature>
<feature type="binding site">
    <location>
        <position position="117"/>
    </location>
    <ligand>
        <name>Mg(2+)</name>
        <dbReference type="ChEBI" id="CHEBI:18420"/>
    </ligand>
</feature>
<feature type="binding site" evidence="1">
    <location>
        <position position="135"/>
    </location>
    <ligand>
        <name>substrate</name>
    </ligand>
</feature>
<feature type="strand" evidence="6">
    <location>
        <begin position="9"/>
        <end position="18"/>
    </location>
</feature>
<feature type="turn" evidence="6">
    <location>
        <begin position="19"/>
        <end position="21"/>
    </location>
</feature>
<feature type="strand" evidence="6">
    <location>
        <begin position="23"/>
        <end position="32"/>
    </location>
</feature>
<feature type="strand" evidence="6">
    <location>
        <begin position="36"/>
        <end position="42"/>
    </location>
</feature>
<feature type="helix" evidence="6">
    <location>
        <begin position="49"/>
        <end position="61"/>
    </location>
</feature>
<feature type="turn" evidence="6">
    <location>
        <begin position="65"/>
        <end position="69"/>
    </location>
</feature>
<feature type="strand" evidence="6">
    <location>
        <begin position="72"/>
        <end position="82"/>
    </location>
</feature>
<feature type="helix" evidence="6">
    <location>
        <begin position="85"/>
        <end position="90"/>
    </location>
</feature>
<feature type="strand" evidence="6">
    <location>
        <begin position="97"/>
        <end position="109"/>
    </location>
</feature>
<feature type="strand" evidence="6">
    <location>
        <begin position="116"/>
        <end position="125"/>
    </location>
</feature>
<feature type="helix" evidence="6">
    <location>
        <begin position="126"/>
        <end position="132"/>
    </location>
</feature>
<feature type="helix" evidence="6">
    <location>
        <begin position="136"/>
        <end position="145"/>
    </location>
</feature>
<name>NUDB_ECOLI</name>
<sequence length="150" mass="17306">MKDKVYKRPVSILVVIYAQDTKRVLMLQRRDDPDFWQSVTGSVEEGETAPQAAMREVKEEVTIDVVAEQLTLIDCQRTVEFEIFSHLRHRYAPGVTRNTESWFCLALPHERQIVFTEHLAYKWLDAPAAAALTKSWSNRQAIEQFVINAA</sequence>
<reference key="1">
    <citation type="journal article" date="1991" name="J. Bacteriol.">
        <title>Resolution of Holliday junctions in Escherichia coli: identification of the ruvC gene product as a 19-kilodalton protein.</title>
        <authorList>
            <person name="Sharples G.J."/>
            <person name="Lloyd R.G."/>
        </authorList>
    </citation>
    <scope>NUCLEOTIDE SEQUENCE [GENOMIC DNA]</scope>
</reference>
<reference key="2">
    <citation type="journal article" date="1991" name="J. Bacteriol.">
        <title>Molecular analysis of the Escherichia coli ruvC gene, which encodes a Holliday junction-specific endonuclease.</title>
        <authorList>
            <person name="Takahagi M."/>
            <person name="Iwasaki H."/>
            <person name="Nakata A."/>
            <person name="Shinagawa H."/>
        </authorList>
    </citation>
    <scope>NUCLEOTIDE SEQUENCE [GENOMIC DNA]</scope>
</reference>
<reference key="3">
    <citation type="journal article" date="1996" name="DNA Res.">
        <title>A 460-kb DNA sequence of the Escherichia coli K-12 genome corresponding to the 40.1-50.0 min region on the linkage map.</title>
        <authorList>
            <person name="Itoh T."/>
            <person name="Aiba H."/>
            <person name="Baba T."/>
            <person name="Fujita K."/>
            <person name="Hayashi K."/>
            <person name="Inada T."/>
            <person name="Isono K."/>
            <person name="Kasai H."/>
            <person name="Kimura S."/>
            <person name="Kitakawa M."/>
            <person name="Kitagawa M."/>
            <person name="Makino K."/>
            <person name="Miki T."/>
            <person name="Mizobuchi K."/>
            <person name="Mori H."/>
            <person name="Mori T."/>
            <person name="Motomura K."/>
            <person name="Nakade S."/>
            <person name="Nakamura Y."/>
            <person name="Nashimoto H."/>
            <person name="Nishio Y."/>
            <person name="Oshima T."/>
            <person name="Saito N."/>
            <person name="Sampei G."/>
            <person name="Seki Y."/>
            <person name="Sivasundaram S."/>
            <person name="Tagami H."/>
            <person name="Takeda J."/>
            <person name="Takemoto K."/>
            <person name="Wada C."/>
            <person name="Yamamoto Y."/>
            <person name="Horiuchi T."/>
        </authorList>
    </citation>
    <scope>NUCLEOTIDE SEQUENCE [LARGE SCALE GENOMIC DNA]</scope>
    <source>
        <strain>K12 / W3110 / ATCC 27325 / DSM 5911</strain>
    </source>
</reference>
<reference key="4">
    <citation type="journal article" date="1997" name="Science">
        <title>The complete genome sequence of Escherichia coli K-12.</title>
        <authorList>
            <person name="Blattner F.R."/>
            <person name="Plunkett G. III"/>
            <person name="Bloch C.A."/>
            <person name="Perna N.T."/>
            <person name="Burland V."/>
            <person name="Riley M."/>
            <person name="Collado-Vides J."/>
            <person name="Glasner J.D."/>
            <person name="Rode C.K."/>
            <person name="Mayhew G.F."/>
            <person name="Gregor J."/>
            <person name="Davis N.W."/>
            <person name="Kirkpatrick H.A."/>
            <person name="Goeden M.A."/>
            <person name="Rose D.J."/>
            <person name="Mau B."/>
            <person name="Shao Y."/>
        </authorList>
    </citation>
    <scope>NUCLEOTIDE SEQUENCE [LARGE SCALE GENOMIC DNA]</scope>
    <source>
        <strain>K12 / MG1655 / ATCC 47076</strain>
    </source>
</reference>
<reference key="5">
    <citation type="journal article" date="2006" name="Mol. Syst. Biol.">
        <title>Highly accurate genome sequences of Escherichia coli K-12 strains MG1655 and W3110.</title>
        <authorList>
            <person name="Hayashi K."/>
            <person name="Morooka N."/>
            <person name="Yamamoto Y."/>
            <person name="Fujita K."/>
            <person name="Isono K."/>
            <person name="Choi S."/>
            <person name="Ohtsubo E."/>
            <person name="Baba T."/>
            <person name="Wanner B.L."/>
            <person name="Mori H."/>
            <person name="Horiuchi T."/>
        </authorList>
    </citation>
    <scope>NUCLEOTIDE SEQUENCE [LARGE SCALE GENOMIC DNA]</scope>
    <source>
        <strain>K12 / W3110 / ATCC 27325 / DSM 5911</strain>
    </source>
</reference>
<reference key="6">
    <citation type="journal article" date="1994" name="J. Biol. Chem.">
        <title>Purification of the MutX protein of Streptococcus pneumoniae, a homologue of Escherichia coli MutT. Identification of a novel catalytic domain for nucleoside triphosphate pyrophosphohydrolase activity.</title>
        <authorList>
            <person name="Bullions L.C."/>
            <person name="Mejean V."/>
            <person name="Claverys J.-P."/>
            <person name="Bessman M.J."/>
        </authorList>
    </citation>
    <scope>CHARACTERIZATION</scope>
</reference>
<reference key="7">
    <citation type="journal article" date="1996" name="J. Biol. Chem.">
        <title>Escherichia coli orf17 codes for a nucleoside triphosphate pyrophosphohydrolase member of the MutT family of proteins. Cloning, purification, and characterization of the enzyme.</title>
        <authorList>
            <person name="O'Handley S.F."/>
            <person name="Frick D.N."/>
            <person name="Bullions L.C."/>
            <person name="Mildvan A.S."/>
            <person name="Bessman M.J."/>
        </authorList>
    </citation>
    <scope>FUNCTION</scope>
    <scope>CATALYTIC ACTIVITY</scope>
    <scope>ACTIVITY REGULATION</scope>
    <scope>BIOPHYSICOCHEMICAL PROPERTIES</scope>
    <scope>COFACTOR</scope>
</reference>
<reference key="8">
    <citation type="journal article" date="2007" name="Structure">
        <title>Structure and function of the E. coli dihydroneopterin triphosphate pyrophosphatase: a Nudix enzyme involved in folate biosynthesis.</title>
        <authorList>
            <person name="Gabelli S.B."/>
            <person name="Bianchet M.A."/>
            <person name="Xu W."/>
            <person name="Dunn C.A."/>
            <person name="Niu Z.-D."/>
            <person name="Amzel L.M."/>
            <person name="Bessman M.J."/>
        </authorList>
    </citation>
    <scope>X-RAY CRYSTALLOGRAPHY (1.8 ANGSTROMS) IN COMPLEX WITH PYROPHOSPHATE AND SAMARIUM IONS</scope>
    <scope>FUNCTION</scope>
    <scope>BIOPHYSICOCHEMICAL PROPERTIES</scope>
</reference>